<dbReference type="EMBL" id="CR954246">
    <property type="protein sequence ID" value="CAI85370.1"/>
    <property type="molecule type" value="Genomic_DNA"/>
</dbReference>
<dbReference type="SMR" id="Q3IDT7"/>
<dbReference type="STRING" id="326442.PSHAa0271"/>
<dbReference type="KEGG" id="pha:PSHAa0271"/>
<dbReference type="eggNOG" id="COG1923">
    <property type="taxonomic scope" value="Bacteria"/>
</dbReference>
<dbReference type="HOGENOM" id="CLU_113688_2_2_6"/>
<dbReference type="BioCyc" id="PHAL326442:PSHA_RS01345-MONOMER"/>
<dbReference type="Proteomes" id="UP000006843">
    <property type="component" value="Chromosome I"/>
</dbReference>
<dbReference type="GO" id="GO:0005829">
    <property type="term" value="C:cytosol"/>
    <property type="evidence" value="ECO:0007669"/>
    <property type="project" value="TreeGrafter"/>
</dbReference>
<dbReference type="GO" id="GO:0003723">
    <property type="term" value="F:RNA binding"/>
    <property type="evidence" value="ECO:0007669"/>
    <property type="project" value="UniProtKB-UniRule"/>
</dbReference>
<dbReference type="GO" id="GO:0006355">
    <property type="term" value="P:regulation of DNA-templated transcription"/>
    <property type="evidence" value="ECO:0007669"/>
    <property type="project" value="InterPro"/>
</dbReference>
<dbReference type="GO" id="GO:0043487">
    <property type="term" value="P:regulation of RNA stability"/>
    <property type="evidence" value="ECO:0007669"/>
    <property type="project" value="TreeGrafter"/>
</dbReference>
<dbReference type="GO" id="GO:0045974">
    <property type="term" value="P:regulation of translation, ncRNA-mediated"/>
    <property type="evidence" value="ECO:0007669"/>
    <property type="project" value="TreeGrafter"/>
</dbReference>
<dbReference type="CDD" id="cd01716">
    <property type="entry name" value="Hfq"/>
    <property type="match status" value="1"/>
</dbReference>
<dbReference type="FunFam" id="2.30.30.100:FF:000001">
    <property type="entry name" value="RNA-binding protein Hfq"/>
    <property type="match status" value="1"/>
</dbReference>
<dbReference type="Gene3D" id="2.30.30.100">
    <property type="match status" value="1"/>
</dbReference>
<dbReference type="HAMAP" id="MF_00436">
    <property type="entry name" value="Hfq"/>
    <property type="match status" value="1"/>
</dbReference>
<dbReference type="InterPro" id="IPR005001">
    <property type="entry name" value="Hfq"/>
</dbReference>
<dbReference type="InterPro" id="IPR010920">
    <property type="entry name" value="LSM_dom_sf"/>
</dbReference>
<dbReference type="InterPro" id="IPR047575">
    <property type="entry name" value="Sm"/>
</dbReference>
<dbReference type="NCBIfam" id="TIGR02383">
    <property type="entry name" value="Hfq"/>
    <property type="match status" value="1"/>
</dbReference>
<dbReference type="NCBIfam" id="NF001602">
    <property type="entry name" value="PRK00395.1"/>
    <property type="match status" value="1"/>
</dbReference>
<dbReference type="PANTHER" id="PTHR34772">
    <property type="entry name" value="RNA-BINDING PROTEIN HFQ"/>
    <property type="match status" value="1"/>
</dbReference>
<dbReference type="PANTHER" id="PTHR34772:SF1">
    <property type="entry name" value="RNA-BINDING PROTEIN HFQ"/>
    <property type="match status" value="1"/>
</dbReference>
<dbReference type="Pfam" id="PF17209">
    <property type="entry name" value="Hfq"/>
    <property type="match status" value="1"/>
</dbReference>
<dbReference type="SUPFAM" id="SSF50182">
    <property type="entry name" value="Sm-like ribonucleoproteins"/>
    <property type="match status" value="1"/>
</dbReference>
<dbReference type="PROSITE" id="PS52002">
    <property type="entry name" value="SM"/>
    <property type="match status" value="1"/>
</dbReference>
<keyword id="KW-1185">Reference proteome</keyword>
<keyword id="KW-0694">RNA-binding</keyword>
<keyword id="KW-0346">Stress response</keyword>
<gene>
    <name evidence="1" type="primary">hfq</name>
    <name type="ordered locus">PSHAa0271</name>
</gene>
<protein>
    <recommendedName>
        <fullName evidence="1">RNA-binding protein Hfq</fullName>
    </recommendedName>
</protein>
<proteinExistence type="inferred from homology"/>
<sequence length="87" mass="9741">MAKGQSLQDPFLNALRRERIPVSIFLVNGIKLQGKIQSFDQFVILLENTVNQMVYKHAISTVVPARAVNFQGVQENDDTEEPEAGNI</sequence>
<name>HFQ_PSET1</name>
<comment type="function">
    <text evidence="1">RNA chaperone that binds small regulatory RNA (sRNAs) and mRNAs to facilitate mRNA translational regulation in response to envelope stress, environmental stress and changes in metabolite concentrations. Also binds with high specificity to tRNAs.</text>
</comment>
<comment type="subunit">
    <text evidence="1">Homohexamer.</text>
</comment>
<comment type="similarity">
    <text evidence="1">Belongs to the Hfq family.</text>
</comment>
<feature type="chain" id="PRO_0000265172" description="RNA-binding protein Hfq">
    <location>
        <begin position="1"/>
        <end position="87"/>
    </location>
</feature>
<feature type="domain" description="Sm" evidence="2">
    <location>
        <begin position="9"/>
        <end position="68"/>
    </location>
</feature>
<accession>Q3IDT7</accession>
<organism>
    <name type="scientific">Pseudoalteromonas translucida (strain TAC 125)</name>
    <dbReference type="NCBI Taxonomy" id="326442"/>
    <lineage>
        <taxon>Bacteria</taxon>
        <taxon>Pseudomonadati</taxon>
        <taxon>Pseudomonadota</taxon>
        <taxon>Gammaproteobacteria</taxon>
        <taxon>Alteromonadales</taxon>
        <taxon>Pseudoalteromonadaceae</taxon>
        <taxon>Pseudoalteromonas</taxon>
    </lineage>
</organism>
<evidence type="ECO:0000255" key="1">
    <source>
        <dbReference type="HAMAP-Rule" id="MF_00436"/>
    </source>
</evidence>
<evidence type="ECO:0000255" key="2">
    <source>
        <dbReference type="PROSITE-ProRule" id="PRU01346"/>
    </source>
</evidence>
<reference key="1">
    <citation type="journal article" date="2005" name="Genome Res.">
        <title>Coping with cold: the genome of the versatile marine Antarctica bacterium Pseudoalteromonas haloplanktis TAC125.</title>
        <authorList>
            <person name="Medigue C."/>
            <person name="Krin E."/>
            <person name="Pascal G."/>
            <person name="Barbe V."/>
            <person name="Bernsel A."/>
            <person name="Bertin P.N."/>
            <person name="Cheung F."/>
            <person name="Cruveiller S."/>
            <person name="D'Amico S."/>
            <person name="Duilio A."/>
            <person name="Fang G."/>
            <person name="Feller G."/>
            <person name="Ho C."/>
            <person name="Mangenot S."/>
            <person name="Marino G."/>
            <person name="Nilsson J."/>
            <person name="Parrilli E."/>
            <person name="Rocha E.P.C."/>
            <person name="Rouy Z."/>
            <person name="Sekowska A."/>
            <person name="Tutino M.L."/>
            <person name="Vallenet D."/>
            <person name="von Heijne G."/>
            <person name="Danchin A."/>
        </authorList>
    </citation>
    <scope>NUCLEOTIDE SEQUENCE [LARGE SCALE GENOMIC DNA]</scope>
    <source>
        <strain>TAC 125</strain>
    </source>
</reference>